<organism>
    <name type="scientific">Xanthomonas oryzae pv. oryzae (strain MAFF 311018)</name>
    <dbReference type="NCBI Taxonomy" id="342109"/>
    <lineage>
        <taxon>Bacteria</taxon>
        <taxon>Pseudomonadati</taxon>
        <taxon>Pseudomonadota</taxon>
        <taxon>Gammaproteobacteria</taxon>
        <taxon>Lysobacterales</taxon>
        <taxon>Lysobacteraceae</taxon>
        <taxon>Xanthomonas</taxon>
    </lineage>
</organism>
<comment type="function">
    <text evidence="1">O-methyltransferase that catalyzes the 2 O-methylation steps in the ubiquinone biosynthetic pathway.</text>
</comment>
<comment type="catalytic activity">
    <reaction evidence="1">
        <text>a 3-demethylubiquinol + S-adenosyl-L-methionine = a ubiquinol + S-adenosyl-L-homocysteine + H(+)</text>
        <dbReference type="Rhea" id="RHEA:44380"/>
        <dbReference type="Rhea" id="RHEA-COMP:9566"/>
        <dbReference type="Rhea" id="RHEA-COMP:10914"/>
        <dbReference type="ChEBI" id="CHEBI:15378"/>
        <dbReference type="ChEBI" id="CHEBI:17976"/>
        <dbReference type="ChEBI" id="CHEBI:57856"/>
        <dbReference type="ChEBI" id="CHEBI:59789"/>
        <dbReference type="ChEBI" id="CHEBI:84422"/>
        <dbReference type="EC" id="2.1.1.64"/>
    </reaction>
</comment>
<comment type="catalytic activity">
    <reaction evidence="1">
        <text>a 3-(all-trans-polyprenyl)benzene-1,2-diol + S-adenosyl-L-methionine = a 2-methoxy-6-(all-trans-polyprenyl)phenol + S-adenosyl-L-homocysteine + H(+)</text>
        <dbReference type="Rhea" id="RHEA:31411"/>
        <dbReference type="Rhea" id="RHEA-COMP:9550"/>
        <dbReference type="Rhea" id="RHEA-COMP:9551"/>
        <dbReference type="ChEBI" id="CHEBI:15378"/>
        <dbReference type="ChEBI" id="CHEBI:57856"/>
        <dbReference type="ChEBI" id="CHEBI:59789"/>
        <dbReference type="ChEBI" id="CHEBI:62729"/>
        <dbReference type="ChEBI" id="CHEBI:62731"/>
        <dbReference type="EC" id="2.1.1.222"/>
    </reaction>
</comment>
<comment type="pathway">
    <text evidence="1">Cofactor biosynthesis; ubiquinone biosynthesis.</text>
</comment>
<comment type="similarity">
    <text evidence="1">Belongs to the methyltransferase superfamily. UbiG/COQ3 family.</text>
</comment>
<feature type="chain" id="PRO_0000241747" description="Ubiquinone biosynthesis O-methyltransferase">
    <location>
        <begin position="1"/>
        <end position="239"/>
    </location>
</feature>
<feature type="binding site" evidence="1">
    <location>
        <position position="44"/>
    </location>
    <ligand>
        <name>S-adenosyl-L-methionine</name>
        <dbReference type="ChEBI" id="CHEBI:59789"/>
    </ligand>
</feature>
<feature type="binding site" evidence="1">
    <location>
        <position position="63"/>
    </location>
    <ligand>
        <name>S-adenosyl-L-methionine</name>
        <dbReference type="ChEBI" id="CHEBI:59789"/>
    </ligand>
</feature>
<feature type="binding site" evidence="1">
    <location>
        <position position="84"/>
    </location>
    <ligand>
        <name>S-adenosyl-L-methionine</name>
        <dbReference type="ChEBI" id="CHEBI:59789"/>
    </ligand>
</feature>
<feature type="binding site" evidence="1">
    <location>
        <position position="128"/>
    </location>
    <ligand>
        <name>S-adenosyl-L-methionine</name>
        <dbReference type="ChEBI" id="CHEBI:59789"/>
    </ligand>
</feature>
<reference key="1">
    <citation type="journal article" date="2005" name="Jpn. Agric. Res. Q.">
        <title>Genome sequence of Xanthomonas oryzae pv. oryzae suggests contribution of large numbers of effector genes and insertion sequences to its race diversity.</title>
        <authorList>
            <person name="Ochiai H."/>
            <person name="Inoue Y."/>
            <person name="Takeya M."/>
            <person name="Sasaki A."/>
            <person name="Kaku H."/>
        </authorList>
    </citation>
    <scope>NUCLEOTIDE SEQUENCE [LARGE SCALE GENOMIC DNA]</scope>
    <source>
        <strain>MAFF 311018</strain>
    </source>
</reference>
<protein>
    <recommendedName>
        <fullName evidence="1">Ubiquinone biosynthesis O-methyltransferase</fullName>
    </recommendedName>
    <alternativeName>
        <fullName evidence="1">2-polyprenyl-6-hydroxyphenol methylase</fullName>
        <ecNumber evidence="1">2.1.1.222</ecNumber>
    </alternativeName>
    <alternativeName>
        <fullName evidence="1">3-demethylubiquinone 3-O-methyltransferase</fullName>
        <ecNumber evidence="1">2.1.1.64</ecNumber>
    </alternativeName>
</protein>
<accession>Q2P2C4</accession>
<gene>
    <name evidence="1" type="primary">ubiG</name>
    <name type="ordered locus">XOO2548</name>
</gene>
<sequence>MNSNTQPASGNFHQSELDKFAALANRWWDADGPQKPLHALNPVRLDYVSARLDLAGARVLDVGCGGGLLSESMARLGAQVTAIDLAPELVKVARLHGLESSVQVDYRVQSVEDLAAEQTGSFDAVTCMEMLEHVPDPTAIIRACARLLKPGGKLFLSTLNRTPAAFALAVVGAEYIARLLPRGTHHYKDFIKPAELAAWLRNAELQLEDVSGMLYEPWRNRARLSSRTEVNYLAYAVKP</sequence>
<evidence type="ECO:0000255" key="1">
    <source>
        <dbReference type="HAMAP-Rule" id="MF_00472"/>
    </source>
</evidence>
<name>UBIG_XANOM</name>
<keyword id="KW-0489">Methyltransferase</keyword>
<keyword id="KW-0949">S-adenosyl-L-methionine</keyword>
<keyword id="KW-0808">Transferase</keyword>
<keyword id="KW-0831">Ubiquinone biosynthesis</keyword>
<dbReference type="EC" id="2.1.1.222" evidence="1"/>
<dbReference type="EC" id="2.1.1.64" evidence="1"/>
<dbReference type="EMBL" id="AP008229">
    <property type="protein sequence ID" value="BAE69303.1"/>
    <property type="molecule type" value="Genomic_DNA"/>
</dbReference>
<dbReference type="RefSeq" id="WP_011259306.1">
    <property type="nucleotide sequence ID" value="NC_007705.1"/>
</dbReference>
<dbReference type="SMR" id="Q2P2C4"/>
<dbReference type="KEGG" id="xom:XOO2548"/>
<dbReference type="HOGENOM" id="CLU_042432_5_0_6"/>
<dbReference type="UniPathway" id="UPA00232"/>
<dbReference type="GO" id="GO:0102208">
    <property type="term" value="F:2-polyprenyl-6-hydroxyphenol methylase activity"/>
    <property type="evidence" value="ECO:0007669"/>
    <property type="project" value="UniProtKB-EC"/>
</dbReference>
<dbReference type="GO" id="GO:0061542">
    <property type="term" value="F:3-demethylubiquinol 3-O-methyltransferase activity"/>
    <property type="evidence" value="ECO:0007669"/>
    <property type="project" value="UniProtKB-UniRule"/>
</dbReference>
<dbReference type="GO" id="GO:0010420">
    <property type="term" value="F:polyprenyldihydroxybenzoate methyltransferase activity"/>
    <property type="evidence" value="ECO:0007669"/>
    <property type="project" value="InterPro"/>
</dbReference>
<dbReference type="GO" id="GO:0032259">
    <property type="term" value="P:methylation"/>
    <property type="evidence" value="ECO:0007669"/>
    <property type="project" value="UniProtKB-KW"/>
</dbReference>
<dbReference type="CDD" id="cd02440">
    <property type="entry name" value="AdoMet_MTases"/>
    <property type="match status" value="1"/>
</dbReference>
<dbReference type="FunFam" id="3.40.50.150:FF:000028">
    <property type="entry name" value="Ubiquinone biosynthesis O-methyltransferase"/>
    <property type="match status" value="1"/>
</dbReference>
<dbReference type="Gene3D" id="3.40.50.150">
    <property type="entry name" value="Vaccinia Virus protein VP39"/>
    <property type="match status" value="1"/>
</dbReference>
<dbReference type="HAMAP" id="MF_00472">
    <property type="entry name" value="UbiG"/>
    <property type="match status" value="1"/>
</dbReference>
<dbReference type="InterPro" id="IPR029063">
    <property type="entry name" value="SAM-dependent_MTases_sf"/>
</dbReference>
<dbReference type="InterPro" id="IPR010233">
    <property type="entry name" value="UbiG_MeTrfase"/>
</dbReference>
<dbReference type="NCBIfam" id="TIGR01983">
    <property type="entry name" value="UbiG"/>
    <property type="match status" value="1"/>
</dbReference>
<dbReference type="PANTHER" id="PTHR43464">
    <property type="entry name" value="METHYLTRANSFERASE"/>
    <property type="match status" value="1"/>
</dbReference>
<dbReference type="PANTHER" id="PTHR43464:SF19">
    <property type="entry name" value="UBIQUINONE BIOSYNTHESIS O-METHYLTRANSFERASE, MITOCHONDRIAL"/>
    <property type="match status" value="1"/>
</dbReference>
<dbReference type="Pfam" id="PF13489">
    <property type="entry name" value="Methyltransf_23"/>
    <property type="match status" value="1"/>
</dbReference>
<dbReference type="SUPFAM" id="SSF53335">
    <property type="entry name" value="S-adenosyl-L-methionine-dependent methyltransferases"/>
    <property type="match status" value="1"/>
</dbReference>
<proteinExistence type="inferred from homology"/>